<gene>
    <name evidence="1" type="primary">cca</name>
    <name type="ordered locus">BCE33L1419</name>
</gene>
<keyword id="KW-0067">ATP-binding</keyword>
<keyword id="KW-0460">Magnesium</keyword>
<keyword id="KW-0479">Metal-binding</keyword>
<keyword id="KW-0547">Nucleotide-binding</keyword>
<keyword id="KW-0548">Nucleotidyltransferase</keyword>
<keyword id="KW-0692">RNA repair</keyword>
<keyword id="KW-0694">RNA-binding</keyword>
<keyword id="KW-0808">Transferase</keyword>
<keyword id="KW-0819">tRNA processing</keyword>
<name>CCA_BACCZ</name>
<protein>
    <recommendedName>
        <fullName evidence="1">CCA-adding enzyme</fullName>
        <ecNumber evidence="1">2.7.7.72</ecNumber>
    </recommendedName>
    <alternativeName>
        <fullName evidence="1">CCA tRNA nucleotidyltransferase</fullName>
    </alternativeName>
    <alternativeName>
        <fullName evidence="1">tRNA CCA-pyrophosphorylase</fullName>
    </alternativeName>
    <alternativeName>
        <fullName evidence="1">tRNA adenylyl-/cytidylyl- transferase</fullName>
    </alternativeName>
    <alternativeName>
        <fullName evidence="1">tRNA nucleotidyltransferase</fullName>
    </alternativeName>
    <alternativeName>
        <fullName evidence="1">tRNA-NT</fullName>
    </alternativeName>
</protein>
<organism>
    <name type="scientific">Bacillus cereus (strain ZK / E33L)</name>
    <dbReference type="NCBI Taxonomy" id="288681"/>
    <lineage>
        <taxon>Bacteria</taxon>
        <taxon>Bacillati</taxon>
        <taxon>Bacillota</taxon>
        <taxon>Bacilli</taxon>
        <taxon>Bacillales</taxon>
        <taxon>Bacillaceae</taxon>
        <taxon>Bacillus</taxon>
        <taxon>Bacillus cereus group</taxon>
    </lineage>
</organism>
<evidence type="ECO:0000255" key="1">
    <source>
        <dbReference type="HAMAP-Rule" id="MF_01263"/>
    </source>
</evidence>
<feature type="chain" id="PRO_0000139028" description="CCA-adding enzyme">
    <location>
        <begin position="1"/>
        <end position="397"/>
    </location>
</feature>
<feature type="binding site" evidence="1">
    <location>
        <position position="26"/>
    </location>
    <ligand>
        <name>ATP</name>
        <dbReference type="ChEBI" id="CHEBI:30616"/>
    </ligand>
</feature>
<feature type="binding site" evidence="1">
    <location>
        <position position="26"/>
    </location>
    <ligand>
        <name>CTP</name>
        <dbReference type="ChEBI" id="CHEBI:37563"/>
    </ligand>
</feature>
<feature type="binding site" evidence="1">
    <location>
        <position position="29"/>
    </location>
    <ligand>
        <name>ATP</name>
        <dbReference type="ChEBI" id="CHEBI:30616"/>
    </ligand>
</feature>
<feature type="binding site" evidence="1">
    <location>
        <position position="29"/>
    </location>
    <ligand>
        <name>CTP</name>
        <dbReference type="ChEBI" id="CHEBI:37563"/>
    </ligand>
</feature>
<feature type="binding site" evidence="1">
    <location>
        <position position="39"/>
    </location>
    <ligand>
        <name>Mg(2+)</name>
        <dbReference type="ChEBI" id="CHEBI:18420"/>
    </ligand>
</feature>
<feature type="binding site" evidence="1">
    <location>
        <position position="41"/>
    </location>
    <ligand>
        <name>Mg(2+)</name>
        <dbReference type="ChEBI" id="CHEBI:18420"/>
    </ligand>
</feature>
<feature type="binding site" evidence="1">
    <location>
        <position position="110"/>
    </location>
    <ligand>
        <name>ATP</name>
        <dbReference type="ChEBI" id="CHEBI:30616"/>
    </ligand>
</feature>
<feature type="binding site" evidence="1">
    <location>
        <position position="110"/>
    </location>
    <ligand>
        <name>CTP</name>
        <dbReference type="ChEBI" id="CHEBI:37563"/>
    </ligand>
</feature>
<feature type="binding site" evidence="1">
    <location>
        <position position="153"/>
    </location>
    <ligand>
        <name>ATP</name>
        <dbReference type="ChEBI" id="CHEBI:30616"/>
    </ligand>
</feature>
<feature type="binding site" evidence="1">
    <location>
        <position position="153"/>
    </location>
    <ligand>
        <name>CTP</name>
        <dbReference type="ChEBI" id="CHEBI:37563"/>
    </ligand>
</feature>
<feature type="binding site" evidence="1">
    <location>
        <position position="156"/>
    </location>
    <ligand>
        <name>ATP</name>
        <dbReference type="ChEBI" id="CHEBI:30616"/>
    </ligand>
</feature>
<feature type="binding site" evidence="1">
    <location>
        <position position="156"/>
    </location>
    <ligand>
        <name>CTP</name>
        <dbReference type="ChEBI" id="CHEBI:37563"/>
    </ligand>
</feature>
<feature type="binding site" evidence="1">
    <location>
        <position position="159"/>
    </location>
    <ligand>
        <name>ATP</name>
        <dbReference type="ChEBI" id="CHEBI:30616"/>
    </ligand>
</feature>
<feature type="binding site" evidence="1">
    <location>
        <position position="159"/>
    </location>
    <ligand>
        <name>CTP</name>
        <dbReference type="ChEBI" id="CHEBI:37563"/>
    </ligand>
</feature>
<feature type="binding site" evidence="1">
    <location>
        <position position="162"/>
    </location>
    <ligand>
        <name>ATP</name>
        <dbReference type="ChEBI" id="CHEBI:30616"/>
    </ligand>
</feature>
<feature type="binding site" evidence="1">
    <location>
        <position position="162"/>
    </location>
    <ligand>
        <name>CTP</name>
        <dbReference type="ChEBI" id="CHEBI:37563"/>
    </ligand>
</feature>
<accession>Q63DJ6</accession>
<dbReference type="EC" id="2.7.7.72" evidence="1"/>
<dbReference type="EMBL" id="CP000001">
    <property type="protein sequence ID" value="AAU18831.1"/>
    <property type="molecule type" value="Genomic_DNA"/>
</dbReference>
<dbReference type="RefSeq" id="WP_000439305.1">
    <property type="nucleotide sequence ID" value="NZ_CP009968.1"/>
</dbReference>
<dbReference type="SMR" id="Q63DJ6"/>
<dbReference type="KEGG" id="bcz:BCE33L1419"/>
<dbReference type="PATRIC" id="fig|288681.22.peg.4134"/>
<dbReference type="Proteomes" id="UP000002612">
    <property type="component" value="Chromosome"/>
</dbReference>
<dbReference type="GO" id="GO:0005524">
    <property type="term" value="F:ATP binding"/>
    <property type="evidence" value="ECO:0007669"/>
    <property type="project" value="UniProtKB-UniRule"/>
</dbReference>
<dbReference type="GO" id="GO:0004810">
    <property type="term" value="F:CCA tRNA nucleotidyltransferase activity"/>
    <property type="evidence" value="ECO:0007669"/>
    <property type="project" value="UniProtKB-UniRule"/>
</dbReference>
<dbReference type="GO" id="GO:0000287">
    <property type="term" value="F:magnesium ion binding"/>
    <property type="evidence" value="ECO:0007669"/>
    <property type="project" value="UniProtKB-UniRule"/>
</dbReference>
<dbReference type="GO" id="GO:0000049">
    <property type="term" value="F:tRNA binding"/>
    <property type="evidence" value="ECO:0007669"/>
    <property type="project" value="UniProtKB-UniRule"/>
</dbReference>
<dbReference type="GO" id="GO:0042245">
    <property type="term" value="P:RNA repair"/>
    <property type="evidence" value="ECO:0007669"/>
    <property type="project" value="UniProtKB-KW"/>
</dbReference>
<dbReference type="GO" id="GO:0001680">
    <property type="term" value="P:tRNA 3'-terminal CCA addition"/>
    <property type="evidence" value="ECO:0007669"/>
    <property type="project" value="UniProtKB-UniRule"/>
</dbReference>
<dbReference type="CDD" id="cd05398">
    <property type="entry name" value="NT_ClassII-CCAase"/>
    <property type="match status" value="1"/>
</dbReference>
<dbReference type="Gene3D" id="1.10.110.30">
    <property type="match status" value="1"/>
</dbReference>
<dbReference type="Gene3D" id="1.10.246.80">
    <property type="match status" value="1"/>
</dbReference>
<dbReference type="Gene3D" id="1.20.58.560">
    <property type="match status" value="1"/>
</dbReference>
<dbReference type="Gene3D" id="3.30.460.10">
    <property type="entry name" value="Beta Polymerase, domain 2"/>
    <property type="match status" value="1"/>
</dbReference>
<dbReference type="HAMAP" id="MF_01263">
    <property type="entry name" value="CCA_bact_type3"/>
    <property type="match status" value="1"/>
</dbReference>
<dbReference type="InterPro" id="IPR050264">
    <property type="entry name" value="Bact_CCA-adding_enz_type3_sf"/>
</dbReference>
<dbReference type="InterPro" id="IPR032810">
    <property type="entry name" value="CCA-adding_enz_C"/>
</dbReference>
<dbReference type="InterPro" id="IPR023068">
    <property type="entry name" value="CCA-adding_enz_firmicutes"/>
</dbReference>
<dbReference type="InterPro" id="IPR043519">
    <property type="entry name" value="NT_sf"/>
</dbReference>
<dbReference type="InterPro" id="IPR002646">
    <property type="entry name" value="PolA_pol_head_dom"/>
</dbReference>
<dbReference type="InterPro" id="IPR032828">
    <property type="entry name" value="PolyA_RNA-bd"/>
</dbReference>
<dbReference type="NCBIfam" id="NF009814">
    <property type="entry name" value="PRK13299.1"/>
    <property type="match status" value="1"/>
</dbReference>
<dbReference type="PANTHER" id="PTHR46173">
    <property type="entry name" value="CCA TRNA NUCLEOTIDYLTRANSFERASE 1, MITOCHONDRIAL"/>
    <property type="match status" value="1"/>
</dbReference>
<dbReference type="PANTHER" id="PTHR46173:SF1">
    <property type="entry name" value="CCA TRNA NUCLEOTIDYLTRANSFERASE 1, MITOCHONDRIAL"/>
    <property type="match status" value="1"/>
</dbReference>
<dbReference type="Pfam" id="PF01743">
    <property type="entry name" value="PolyA_pol"/>
    <property type="match status" value="1"/>
</dbReference>
<dbReference type="Pfam" id="PF12627">
    <property type="entry name" value="PolyA_pol_RNAbd"/>
    <property type="match status" value="1"/>
</dbReference>
<dbReference type="Pfam" id="PF13735">
    <property type="entry name" value="tRNA_NucTran2_2"/>
    <property type="match status" value="1"/>
</dbReference>
<dbReference type="SUPFAM" id="SSF81301">
    <property type="entry name" value="Nucleotidyltransferase"/>
    <property type="match status" value="1"/>
</dbReference>
<dbReference type="SUPFAM" id="SSF81891">
    <property type="entry name" value="Poly A polymerase C-terminal region-like"/>
    <property type="match status" value="1"/>
</dbReference>
<comment type="function">
    <text evidence="1">Catalyzes the addition and repair of the essential 3'-terminal CCA sequence in tRNAs without using a nucleic acid template. Adds these three nucleotides in the order of C, C, and A to the tRNA nucleotide-73, using CTP and ATP as substrates and producing inorganic pyrophosphate. tRNA 3'-terminal CCA addition is required both for tRNA processing and repair. Also involved in tRNA surveillance by mediating tandem CCA addition to generate a CCACCA at the 3' terminus of unstable tRNAs. While stable tRNAs receive only 3'-terminal CCA, unstable tRNAs are marked with CCACCA and rapidly degraded.</text>
</comment>
<comment type="catalytic activity">
    <reaction evidence="1">
        <text>a tRNA precursor + 2 CTP + ATP = a tRNA with a 3' CCA end + 3 diphosphate</text>
        <dbReference type="Rhea" id="RHEA:14433"/>
        <dbReference type="Rhea" id="RHEA-COMP:10465"/>
        <dbReference type="Rhea" id="RHEA-COMP:10468"/>
        <dbReference type="ChEBI" id="CHEBI:30616"/>
        <dbReference type="ChEBI" id="CHEBI:33019"/>
        <dbReference type="ChEBI" id="CHEBI:37563"/>
        <dbReference type="ChEBI" id="CHEBI:74896"/>
        <dbReference type="ChEBI" id="CHEBI:83071"/>
        <dbReference type="EC" id="2.7.7.72"/>
    </reaction>
</comment>
<comment type="catalytic activity">
    <reaction evidence="1">
        <text>a tRNA with a 3' CCA end + 2 CTP + ATP = a tRNA with a 3' CCACCA end + 3 diphosphate</text>
        <dbReference type="Rhea" id="RHEA:76235"/>
        <dbReference type="Rhea" id="RHEA-COMP:10468"/>
        <dbReference type="Rhea" id="RHEA-COMP:18655"/>
        <dbReference type="ChEBI" id="CHEBI:30616"/>
        <dbReference type="ChEBI" id="CHEBI:33019"/>
        <dbReference type="ChEBI" id="CHEBI:37563"/>
        <dbReference type="ChEBI" id="CHEBI:83071"/>
        <dbReference type="ChEBI" id="CHEBI:195187"/>
    </reaction>
    <physiologicalReaction direction="left-to-right" evidence="1">
        <dbReference type="Rhea" id="RHEA:76236"/>
    </physiologicalReaction>
</comment>
<comment type="cofactor">
    <cofactor evidence="1">
        <name>Mg(2+)</name>
        <dbReference type="ChEBI" id="CHEBI:18420"/>
    </cofactor>
</comment>
<comment type="subunit">
    <text evidence="1">Homodimer.</text>
</comment>
<comment type="miscellaneous">
    <text evidence="1">A single active site specifically recognizes both ATP and CTP and is responsible for their addition.</text>
</comment>
<comment type="similarity">
    <text evidence="1">Belongs to the tRNA nucleotidyltransferase/poly(A) polymerase family. Bacterial CCA-adding enzyme type 3 subfamily.</text>
</comment>
<proteinExistence type="inferred from homology"/>
<reference key="1">
    <citation type="journal article" date="2006" name="J. Bacteriol.">
        <title>Pathogenomic sequence analysis of Bacillus cereus and Bacillus thuringiensis isolates closely related to Bacillus anthracis.</title>
        <authorList>
            <person name="Han C.S."/>
            <person name="Xie G."/>
            <person name="Challacombe J.F."/>
            <person name="Altherr M.R."/>
            <person name="Bhotika S.S."/>
            <person name="Bruce D."/>
            <person name="Campbell C.S."/>
            <person name="Campbell M.L."/>
            <person name="Chen J."/>
            <person name="Chertkov O."/>
            <person name="Cleland C."/>
            <person name="Dimitrijevic M."/>
            <person name="Doggett N.A."/>
            <person name="Fawcett J.J."/>
            <person name="Glavina T."/>
            <person name="Goodwin L.A."/>
            <person name="Hill K.K."/>
            <person name="Hitchcock P."/>
            <person name="Jackson P.J."/>
            <person name="Keim P."/>
            <person name="Kewalramani A.R."/>
            <person name="Longmire J."/>
            <person name="Lucas S."/>
            <person name="Malfatti S."/>
            <person name="McMurry K."/>
            <person name="Meincke L.J."/>
            <person name="Misra M."/>
            <person name="Moseman B.L."/>
            <person name="Mundt M."/>
            <person name="Munk A.C."/>
            <person name="Okinaka R.T."/>
            <person name="Parson-Quintana B."/>
            <person name="Reilly L.P."/>
            <person name="Richardson P."/>
            <person name="Robinson D.L."/>
            <person name="Rubin E."/>
            <person name="Saunders E."/>
            <person name="Tapia R."/>
            <person name="Tesmer J.G."/>
            <person name="Thayer N."/>
            <person name="Thompson L.S."/>
            <person name="Tice H."/>
            <person name="Ticknor L.O."/>
            <person name="Wills P.L."/>
            <person name="Brettin T.S."/>
            <person name="Gilna P."/>
        </authorList>
    </citation>
    <scope>NUCLEOTIDE SEQUENCE [LARGE SCALE GENOMIC DNA]</scope>
    <source>
        <strain>ZK / E33L</strain>
    </source>
</reference>
<sequence length="397" mass="45958">MERFKKASSIIETLKQQGHEAYFVGGSVRDLIIDRPIGDIDIATSALPEEVMAIFPRHVPVGLEHGTVIVVENGEPYEVTTFRTESEYEDFRRPSSVQFVRSLEEDLKRRDFTMNAIAMTEEGERIDLFAGQEAIQKREIVTVGTAADRFQEDALRMMRGIRFVSTLGFSLETKTKQAIETYGHLLEHIAIERITVEFEKLLTGTYCVKGLKELVETKLFSHLPYLQMSEERLLKATQYNWDSFETDIEAWAFFLYCIGEEHPSVFLRQWKFSNKKIKDIVAVLLTIRKRKEKDWDTVLLYKTGIHIAEMAERVYEAMIESYDHTSVERVQTLFQALPIKSRQEMDVTGNDLLNWASKKPGPWVAEMIQKIEEAIVQGNVVNEKECIREWLQECNLL</sequence>